<dbReference type="EC" id="2.7.1.50" evidence="1"/>
<dbReference type="EMBL" id="CP000382">
    <property type="protein sequence ID" value="ABK60473.1"/>
    <property type="molecule type" value="Genomic_DNA"/>
</dbReference>
<dbReference type="RefSeq" id="WP_011722739.1">
    <property type="nucleotide sequence ID" value="NC_008593.1"/>
</dbReference>
<dbReference type="SMR" id="A0Q299"/>
<dbReference type="STRING" id="386415.NT01CX_0247"/>
<dbReference type="KEGG" id="cno:NT01CX_0247"/>
<dbReference type="PATRIC" id="fig|386415.7.peg.1787"/>
<dbReference type="eggNOG" id="COG2145">
    <property type="taxonomic scope" value="Bacteria"/>
</dbReference>
<dbReference type="HOGENOM" id="CLU_019943_0_0_9"/>
<dbReference type="UniPathway" id="UPA00060">
    <property type="reaction ID" value="UER00139"/>
</dbReference>
<dbReference type="Proteomes" id="UP000008220">
    <property type="component" value="Chromosome"/>
</dbReference>
<dbReference type="GO" id="GO:0005524">
    <property type="term" value="F:ATP binding"/>
    <property type="evidence" value="ECO:0007669"/>
    <property type="project" value="UniProtKB-UniRule"/>
</dbReference>
<dbReference type="GO" id="GO:0004417">
    <property type="term" value="F:hydroxyethylthiazole kinase activity"/>
    <property type="evidence" value="ECO:0007669"/>
    <property type="project" value="UniProtKB-UniRule"/>
</dbReference>
<dbReference type="GO" id="GO:0000287">
    <property type="term" value="F:magnesium ion binding"/>
    <property type="evidence" value="ECO:0007669"/>
    <property type="project" value="UniProtKB-UniRule"/>
</dbReference>
<dbReference type="GO" id="GO:0009228">
    <property type="term" value="P:thiamine biosynthetic process"/>
    <property type="evidence" value="ECO:0007669"/>
    <property type="project" value="UniProtKB-KW"/>
</dbReference>
<dbReference type="GO" id="GO:0009229">
    <property type="term" value="P:thiamine diphosphate biosynthetic process"/>
    <property type="evidence" value="ECO:0007669"/>
    <property type="project" value="UniProtKB-UniRule"/>
</dbReference>
<dbReference type="CDD" id="cd01170">
    <property type="entry name" value="THZ_kinase"/>
    <property type="match status" value="1"/>
</dbReference>
<dbReference type="Gene3D" id="3.40.1190.20">
    <property type="match status" value="1"/>
</dbReference>
<dbReference type="HAMAP" id="MF_00228">
    <property type="entry name" value="Thz_kinase"/>
    <property type="match status" value="1"/>
</dbReference>
<dbReference type="InterPro" id="IPR000417">
    <property type="entry name" value="Hyethyz_kinase"/>
</dbReference>
<dbReference type="InterPro" id="IPR029056">
    <property type="entry name" value="Ribokinase-like"/>
</dbReference>
<dbReference type="NCBIfam" id="NF006830">
    <property type="entry name" value="PRK09355.1"/>
    <property type="match status" value="1"/>
</dbReference>
<dbReference type="NCBIfam" id="TIGR00694">
    <property type="entry name" value="thiM"/>
    <property type="match status" value="1"/>
</dbReference>
<dbReference type="Pfam" id="PF02110">
    <property type="entry name" value="HK"/>
    <property type="match status" value="1"/>
</dbReference>
<dbReference type="PIRSF" id="PIRSF000513">
    <property type="entry name" value="Thz_kinase"/>
    <property type="match status" value="1"/>
</dbReference>
<dbReference type="PRINTS" id="PR01099">
    <property type="entry name" value="HYETHTZKNASE"/>
</dbReference>
<dbReference type="SUPFAM" id="SSF53613">
    <property type="entry name" value="Ribokinase-like"/>
    <property type="match status" value="1"/>
</dbReference>
<comment type="function">
    <text evidence="1">Catalyzes the phosphorylation of the hydroxyl group of 4-methyl-5-beta-hydroxyethylthiazole (THZ).</text>
</comment>
<comment type="catalytic activity">
    <reaction evidence="1">
        <text>5-(2-hydroxyethyl)-4-methylthiazole + ATP = 4-methyl-5-(2-phosphooxyethyl)-thiazole + ADP + H(+)</text>
        <dbReference type="Rhea" id="RHEA:24212"/>
        <dbReference type="ChEBI" id="CHEBI:15378"/>
        <dbReference type="ChEBI" id="CHEBI:17957"/>
        <dbReference type="ChEBI" id="CHEBI:30616"/>
        <dbReference type="ChEBI" id="CHEBI:58296"/>
        <dbReference type="ChEBI" id="CHEBI:456216"/>
        <dbReference type="EC" id="2.7.1.50"/>
    </reaction>
</comment>
<comment type="cofactor">
    <cofactor evidence="1">
        <name>Mg(2+)</name>
        <dbReference type="ChEBI" id="CHEBI:18420"/>
    </cofactor>
</comment>
<comment type="pathway">
    <text evidence="1">Cofactor biosynthesis; thiamine diphosphate biosynthesis; 4-methyl-5-(2-phosphoethyl)-thiazole from 5-(2-hydroxyethyl)-4-methylthiazole: step 1/1.</text>
</comment>
<comment type="similarity">
    <text evidence="1">Belongs to the Thz kinase family.</text>
</comment>
<reference key="1">
    <citation type="journal article" date="2006" name="Nat. Biotechnol.">
        <title>The genome and transcriptomes of the anti-tumor agent Clostridium novyi-NT.</title>
        <authorList>
            <person name="Bettegowda C."/>
            <person name="Huang X."/>
            <person name="Lin J."/>
            <person name="Cheong I."/>
            <person name="Kohli M."/>
            <person name="Szabo S.A."/>
            <person name="Zhang X."/>
            <person name="Diaz L.A. Jr."/>
            <person name="Velculescu V.E."/>
            <person name="Parmigiani G."/>
            <person name="Kinzler K.W."/>
            <person name="Vogelstein B."/>
            <person name="Zhou S."/>
        </authorList>
    </citation>
    <scope>NUCLEOTIDE SEQUENCE [LARGE SCALE GENOMIC DNA]</scope>
    <source>
        <strain>NT</strain>
    </source>
</reference>
<gene>
    <name evidence="1" type="primary">thiM</name>
    <name type="ordered locus">NT01CX_0247</name>
</gene>
<organism>
    <name type="scientific">Clostridium novyi (strain NT)</name>
    <dbReference type="NCBI Taxonomy" id="386415"/>
    <lineage>
        <taxon>Bacteria</taxon>
        <taxon>Bacillati</taxon>
        <taxon>Bacillota</taxon>
        <taxon>Clostridia</taxon>
        <taxon>Eubacteriales</taxon>
        <taxon>Clostridiaceae</taxon>
        <taxon>Clostridium</taxon>
    </lineage>
</organism>
<name>THIM_CLONN</name>
<protein>
    <recommendedName>
        <fullName evidence="1">Hydroxyethylthiazole kinase</fullName>
        <ecNumber evidence="1">2.7.1.50</ecNumber>
    </recommendedName>
    <alternativeName>
        <fullName evidence="1">4-methyl-5-beta-hydroxyethylthiazole kinase</fullName>
        <shortName evidence="1">TH kinase</shortName>
        <shortName evidence="1">Thz kinase</shortName>
    </alternativeName>
</protein>
<proteinExistence type="inferred from homology"/>
<feature type="chain" id="PRO_0000336552" description="Hydroxyethylthiazole kinase">
    <location>
        <begin position="1"/>
        <end position="265"/>
    </location>
</feature>
<feature type="binding site" evidence="1">
    <location>
        <position position="44"/>
    </location>
    <ligand>
        <name>substrate</name>
    </ligand>
</feature>
<feature type="binding site" evidence="1">
    <location>
        <position position="120"/>
    </location>
    <ligand>
        <name>ATP</name>
        <dbReference type="ChEBI" id="CHEBI:30616"/>
    </ligand>
</feature>
<feature type="binding site" evidence="1">
    <location>
        <position position="166"/>
    </location>
    <ligand>
        <name>ATP</name>
        <dbReference type="ChEBI" id="CHEBI:30616"/>
    </ligand>
</feature>
<feature type="binding site" evidence="1">
    <location>
        <position position="193"/>
    </location>
    <ligand>
        <name>substrate</name>
    </ligand>
</feature>
<evidence type="ECO:0000255" key="1">
    <source>
        <dbReference type="HAMAP-Rule" id="MF_00228"/>
    </source>
</evidence>
<keyword id="KW-0067">ATP-binding</keyword>
<keyword id="KW-0418">Kinase</keyword>
<keyword id="KW-0460">Magnesium</keyword>
<keyword id="KW-0479">Metal-binding</keyword>
<keyword id="KW-0547">Nucleotide-binding</keyword>
<keyword id="KW-1185">Reference proteome</keyword>
<keyword id="KW-0784">Thiamine biosynthesis</keyword>
<keyword id="KW-0808">Transferase</keyword>
<sequence length="265" mass="28656">MLENICINFKKVKEKTPLVHSITNYVTINDCANMLLAYGASPAMVESFDESYDFAKLASCIYINLGTLTREQEQSILMVCISAKNNNIPVVLDPVACGAVPHKIALIEKLFEIGRIDIIKGNIGEIKSLAGYNAKTRGVDSIDNGNDSIDACISLAKKYKCIVAATGVKDIVTDGKRTALIENGSKMLTLITGAGCMVGALTAATAGVEDDKFIATITSILSMNIAAEHTEKEVIGPGSFKVKLIDNIYLLKENHLRKEGKIKWI</sequence>
<accession>A0Q299</accession>